<evidence type="ECO:0000250" key="1"/>
<evidence type="ECO:0000269" key="2">
    <source>
    </source>
</evidence>
<evidence type="ECO:0000269" key="3">
    <source>
    </source>
</evidence>
<evidence type="ECO:0000269" key="4">
    <source>
    </source>
</evidence>
<evidence type="ECO:0000269" key="5">
    <source>
    </source>
</evidence>
<evidence type="ECO:0000269" key="6">
    <source>
    </source>
</evidence>
<evidence type="ECO:0000269" key="7">
    <source>
    </source>
</evidence>
<evidence type="ECO:0000269" key="8">
    <source>
    </source>
</evidence>
<evidence type="ECO:0000269" key="9">
    <source>
    </source>
</evidence>
<evidence type="ECO:0000269" key="10">
    <source>
    </source>
</evidence>
<evidence type="ECO:0000269" key="11">
    <source>
    </source>
</evidence>
<evidence type="ECO:0000269" key="12">
    <source>
    </source>
</evidence>
<evidence type="ECO:0000269" key="13">
    <source ref="4"/>
</evidence>
<evidence type="ECO:0000269" key="14">
    <source ref="6"/>
</evidence>
<evidence type="ECO:0000305" key="15"/>
<evidence type="ECO:0007744" key="16">
    <source>
    </source>
</evidence>
<dbReference type="EMBL" id="M36035">
    <property type="protein sequence ID" value="AAA03652.1"/>
    <property type="molecule type" value="mRNA"/>
</dbReference>
<dbReference type="EMBL" id="U12421">
    <property type="protein sequence ID" value="AAA83252.1"/>
    <property type="molecule type" value="Genomic_DNA"/>
</dbReference>
<dbReference type="EMBL" id="AY998017">
    <property type="protein sequence ID" value="AAY45787.1"/>
    <property type="molecule type" value="mRNA"/>
</dbReference>
<dbReference type="EMBL" id="BT006949">
    <property type="protein sequence ID" value="AAP35595.1"/>
    <property type="molecule type" value="mRNA"/>
</dbReference>
<dbReference type="EMBL" id="CR456409">
    <property type="protein sequence ID" value="CAG30295.1"/>
    <property type="molecule type" value="mRNA"/>
</dbReference>
<dbReference type="EMBL" id="AY383615">
    <property type="protein sequence ID" value="AAQ75703.1"/>
    <property type="molecule type" value="Genomic_DNA"/>
</dbReference>
<dbReference type="EMBL" id="Z82214">
    <property type="status" value="NOT_ANNOTATED_CDS"/>
    <property type="molecule type" value="Genomic_DNA"/>
</dbReference>
<dbReference type="EMBL" id="BC001110">
    <property type="protein sequence ID" value="AAH01110.1"/>
    <property type="molecule type" value="mRNA"/>
</dbReference>
<dbReference type="CCDS" id="CCDS33661.1">
    <molecule id="P30536-1"/>
</dbReference>
<dbReference type="PIR" id="I38724">
    <property type="entry name" value="I38724"/>
</dbReference>
<dbReference type="PIR" id="JE0149">
    <property type="entry name" value="JE0149"/>
</dbReference>
<dbReference type="PIR" id="S14257">
    <property type="entry name" value="S14257"/>
</dbReference>
<dbReference type="RefSeq" id="NP_000705.2">
    <molecule id="P30536-1"/>
    <property type="nucleotide sequence ID" value="NM_000714.6"/>
</dbReference>
<dbReference type="RefSeq" id="NP_001243459.1">
    <molecule id="P30536-1"/>
    <property type="nucleotide sequence ID" value="NM_001256530.1"/>
</dbReference>
<dbReference type="RefSeq" id="NP_001243460.1">
    <molecule id="P30536-1"/>
    <property type="nucleotide sequence ID" value="NM_001256531.1"/>
</dbReference>
<dbReference type="RefSeq" id="XP_047297435.1">
    <molecule id="P30536-1"/>
    <property type="nucleotide sequence ID" value="XM_047441479.1"/>
</dbReference>
<dbReference type="SMR" id="P30536"/>
<dbReference type="BioGRID" id="107168">
    <property type="interactions" value="52"/>
</dbReference>
<dbReference type="FunCoup" id="P30536">
    <property type="interactions" value="1015"/>
</dbReference>
<dbReference type="IntAct" id="P30536">
    <property type="interactions" value="25"/>
</dbReference>
<dbReference type="STRING" id="9606.ENSP00000379563"/>
<dbReference type="BindingDB" id="P30536"/>
<dbReference type="ChEMBL" id="CHEMBL5742"/>
<dbReference type="DrugBank" id="DB12537">
    <property type="generic name" value="1,2-Benzodiazepine"/>
</dbReference>
<dbReference type="DrugBank" id="DB00546">
    <property type="generic name" value="Adinazolam"/>
</dbReference>
<dbReference type="DrugBank" id="DB00404">
    <property type="generic name" value="Alprazolam"/>
</dbReference>
<dbReference type="DrugBank" id="DB00475">
    <property type="generic name" value="Chlordiazepoxide"/>
</dbReference>
<dbReference type="DrugBank" id="DB01178">
    <property type="generic name" value="Chlormezanone"/>
</dbReference>
<dbReference type="DrugBank" id="DB01594">
    <property type="generic name" value="Cinolazepam"/>
</dbReference>
<dbReference type="DrugBank" id="DB00628">
    <property type="generic name" value="Clorazepic acid"/>
</dbReference>
<dbReference type="DrugBank" id="DB01559">
    <property type="generic name" value="Clotiazepam"/>
</dbReference>
<dbReference type="DrugBank" id="DB06582">
    <property type="generic name" value="Dextofisopam"/>
</dbReference>
<dbReference type="DrugBank" id="DB00829">
    <property type="generic name" value="Diazepam"/>
</dbReference>
<dbReference type="DrugBank" id="DB12420">
    <property type="generic name" value="Diazepinomicin"/>
</dbReference>
<dbReference type="DrugBank" id="DB12666">
    <property type="generic name" value="Emapunil"/>
</dbReference>
<dbReference type="DrugBank" id="DB01215">
    <property type="generic name" value="Estazolam"/>
</dbReference>
<dbReference type="DrugBank" id="DB00402">
    <property type="generic name" value="Eszopiclone"/>
</dbReference>
<dbReference type="DrugBank" id="DB01567">
    <property type="generic name" value="Fludiazepam"/>
</dbReference>
<dbReference type="DrugBank" id="DB01205">
    <property type="generic name" value="Flumazenil"/>
</dbReference>
<dbReference type="DrugBank" id="DB01544">
    <property type="generic name" value="Flunitrazepam"/>
</dbReference>
<dbReference type="DrugBank" id="DB00690">
    <property type="generic name" value="Flurazepam"/>
</dbReference>
<dbReference type="DrugBank" id="DB00801">
    <property type="generic name" value="Halazepam"/>
</dbReference>
<dbReference type="DrugBank" id="DB00186">
    <property type="generic name" value="Lorazepam"/>
</dbReference>
<dbReference type="DrugBank" id="DB00683">
    <property type="generic name" value="Midazolam"/>
</dbReference>
<dbReference type="DrugBank" id="DB14802">
    <property type="generic name" value="ONO-2952"/>
</dbReference>
<dbReference type="DrugBank" id="DB00842">
    <property type="generic name" value="Oxazepam"/>
</dbReference>
<dbReference type="DrugBank" id="DB01588">
    <property type="generic name" value="Prazepam"/>
</dbReference>
<dbReference type="DrugBank" id="DB01589">
    <property type="generic name" value="Quazepam"/>
</dbReference>
<dbReference type="DrugBank" id="DB06504">
    <property type="generic name" value="S-8510"/>
</dbReference>
<dbReference type="DrugBank" id="DB00231">
    <property type="generic name" value="Temazepam"/>
</dbReference>
<dbReference type="DrugBank" id="DB00897">
    <property type="generic name" value="Triazolam"/>
</dbReference>
<dbReference type="DrugBank" id="DB01198">
    <property type="generic name" value="Zopiclone"/>
</dbReference>
<dbReference type="DrugCentral" id="P30536"/>
<dbReference type="GuidetoPHARMACOLOGY" id="2879"/>
<dbReference type="TCDB" id="9.A.24.1.1">
    <property type="family name" value="the mitochondrial cholesterol/porphyrin/5-aminolevulinic acid uptake translocator protein (tspo) family"/>
</dbReference>
<dbReference type="GlyGen" id="P30536">
    <property type="glycosylation" value="1 site, 1 O-linked glycan (1 site)"/>
</dbReference>
<dbReference type="iPTMnet" id="P30536"/>
<dbReference type="PhosphoSitePlus" id="P30536"/>
<dbReference type="SwissPalm" id="P30536"/>
<dbReference type="BioMuta" id="TSPO"/>
<dbReference type="DMDM" id="313104268"/>
<dbReference type="jPOST" id="P30536"/>
<dbReference type="MassIVE" id="P30536"/>
<dbReference type="PaxDb" id="9606-ENSP00000379563"/>
<dbReference type="PeptideAtlas" id="P30536"/>
<dbReference type="ProteomicsDB" id="54717">
    <molecule id="P30536-1"/>
</dbReference>
<dbReference type="Pumba" id="P30536"/>
<dbReference type="TopDownProteomics" id="P30536-1">
    <molecule id="P30536-1"/>
</dbReference>
<dbReference type="Antibodypedia" id="27480">
    <property type="antibodies" value="299 antibodies from 40 providers"/>
</dbReference>
<dbReference type="DNASU" id="706"/>
<dbReference type="Ensembl" id="ENST00000329563.8">
    <molecule id="P30536-1"/>
    <property type="protein sequence ID" value="ENSP00000328973.4"/>
    <property type="gene ID" value="ENSG00000100300.18"/>
</dbReference>
<dbReference type="Ensembl" id="ENST00000337554.8">
    <molecule id="P30536-1"/>
    <property type="protein sequence ID" value="ENSP00000338004.3"/>
    <property type="gene ID" value="ENSG00000100300.18"/>
</dbReference>
<dbReference type="Ensembl" id="ENST00000396265.4">
    <molecule id="P30536-1"/>
    <property type="protein sequence ID" value="ENSP00000379563.4"/>
    <property type="gene ID" value="ENSG00000100300.18"/>
</dbReference>
<dbReference type="GeneID" id="706"/>
<dbReference type="KEGG" id="hsa:706"/>
<dbReference type="MANE-Select" id="ENST00000337554.8">
    <property type="protein sequence ID" value="ENSP00000338004.3"/>
    <property type="RefSeq nucleotide sequence ID" value="NM_000714.6"/>
    <property type="RefSeq protein sequence ID" value="NP_000705.2"/>
</dbReference>
<dbReference type="UCSC" id="uc003bdn.4">
    <molecule id="P30536-1"/>
    <property type="organism name" value="human"/>
</dbReference>
<dbReference type="AGR" id="HGNC:1158"/>
<dbReference type="CTD" id="706"/>
<dbReference type="DisGeNET" id="706"/>
<dbReference type="GeneCards" id="TSPO"/>
<dbReference type="HGNC" id="HGNC:1158">
    <property type="gene designation" value="TSPO"/>
</dbReference>
<dbReference type="HPA" id="ENSG00000100300">
    <property type="expression patterns" value="Tissue enhanced (esophagus)"/>
</dbReference>
<dbReference type="MIM" id="109610">
    <property type="type" value="gene"/>
</dbReference>
<dbReference type="neXtProt" id="NX_P30536"/>
<dbReference type="OpenTargets" id="ENSG00000100300"/>
<dbReference type="PharmGKB" id="PA25473"/>
<dbReference type="VEuPathDB" id="HostDB:ENSG00000100300"/>
<dbReference type="eggNOG" id="KOG3797">
    <property type="taxonomic scope" value="Eukaryota"/>
</dbReference>
<dbReference type="GeneTree" id="ENSGT00390000012980"/>
<dbReference type="HOGENOM" id="CLU_091805_2_1_1"/>
<dbReference type="InParanoid" id="P30536"/>
<dbReference type="OMA" id="WSWLFFG"/>
<dbReference type="OrthoDB" id="8841220at2759"/>
<dbReference type="PAN-GO" id="P30536">
    <property type="GO annotations" value="3 GO annotations based on evolutionary models"/>
</dbReference>
<dbReference type="PhylomeDB" id="P30536"/>
<dbReference type="TreeFam" id="TF342852"/>
<dbReference type="PathwayCommons" id="P30536"/>
<dbReference type="Reactome" id="R-HSA-196108">
    <property type="pathway name" value="Pregnenolone biosynthesis"/>
</dbReference>
<dbReference type="SignaLink" id="P30536"/>
<dbReference type="BioGRID-ORCS" id="706">
    <property type="hits" value="8 hits in 1164 CRISPR screens"/>
</dbReference>
<dbReference type="ChiTaRS" id="TSPO">
    <property type="organism name" value="human"/>
</dbReference>
<dbReference type="GeneWiki" id="Translocator_protein"/>
<dbReference type="GenomeRNAi" id="706"/>
<dbReference type="Pharos" id="P30536">
    <property type="development level" value="Tchem"/>
</dbReference>
<dbReference type="Proteomes" id="UP000005640">
    <property type="component" value="Chromosome 22"/>
</dbReference>
<dbReference type="RNAct" id="P30536">
    <property type="molecule type" value="protein"/>
</dbReference>
<dbReference type="Bgee" id="ENSG00000100300">
    <property type="expression patterns" value="Expressed in lower esophagus mucosa and 193 other cell types or tissues"/>
</dbReference>
<dbReference type="ExpressionAtlas" id="P30536">
    <property type="expression patterns" value="baseline and differential"/>
</dbReference>
<dbReference type="GO" id="GO:0005829">
    <property type="term" value="C:cytosol"/>
    <property type="evidence" value="ECO:0000314"/>
    <property type="project" value="HPA"/>
</dbReference>
<dbReference type="GO" id="GO:0070062">
    <property type="term" value="C:extracellular exosome"/>
    <property type="evidence" value="ECO:0007005"/>
    <property type="project" value="UniProtKB"/>
</dbReference>
<dbReference type="GO" id="GO:0043231">
    <property type="term" value="C:intracellular membrane-bounded organelle"/>
    <property type="evidence" value="ECO:0000314"/>
    <property type="project" value="HPA"/>
</dbReference>
<dbReference type="GO" id="GO:0016020">
    <property type="term" value="C:membrane"/>
    <property type="evidence" value="ECO:0000318"/>
    <property type="project" value="GO_Central"/>
</dbReference>
<dbReference type="GO" id="GO:0005741">
    <property type="term" value="C:mitochondrial outer membrane"/>
    <property type="evidence" value="ECO:0000304"/>
    <property type="project" value="Reactome"/>
</dbReference>
<dbReference type="GO" id="GO:0005739">
    <property type="term" value="C:mitochondrion"/>
    <property type="evidence" value="ECO:0000314"/>
    <property type="project" value="HPA"/>
</dbReference>
<dbReference type="GO" id="GO:0005497">
    <property type="term" value="F:androgen binding"/>
    <property type="evidence" value="ECO:0007669"/>
    <property type="project" value="Ensembl"/>
</dbReference>
<dbReference type="GO" id="GO:0008503">
    <property type="term" value="F:benzodiazepine receptor activity"/>
    <property type="evidence" value="ECO:0000304"/>
    <property type="project" value="ProtInc"/>
</dbReference>
<dbReference type="GO" id="GO:0015485">
    <property type="term" value="F:cholesterol binding"/>
    <property type="evidence" value="ECO:0000304"/>
    <property type="project" value="HGNC-UCL"/>
</dbReference>
<dbReference type="GO" id="GO:0120020">
    <property type="term" value="F:cholesterol transfer activity"/>
    <property type="evidence" value="ECO:0000304"/>
    <property type="project" value="Reactome"/>
</dbReference>
<dbReference type="GO" id="GO:0044325">
    <property type="term" value="F:transmembrane transporter binding"/>
    <property type="evidence" value="ECO:0007669"/>
    <property type="project" value="Ensembl"/>
</dbReference>
<dbReference type="GO" id="GO:0030325">
    <property type="term" value="P:adrenal gland development"/>
    <property type="evidence" value="ECO:0007669"/>
    <property type="project" value="Ensembl"/>
</dbReference>
<dbReference type="GO" id="GO:0048266">
    <property type="term" value="P:behavioral response to pain"/>
    <property type="evidence" value="ECO:0007669"/>
    <property type="project" value="Ensembl"/>
</dbReference>
<dbReference type="GO" id="GO:0006700">
    <property type="term" value="P:C21-steroid hormone biosynthetic process"/>
    <property type="evidence" value="ECO:0000304"/>
    <property type="project" value="Reactome"/>
</dbReference>
<dbReference type="GO" id="GO:0071476">
    <property type="term" value="P:cellular hypotonic response"/>
    <property type="evidence" value="ECO:0007669"/>
    <property type="project" value="Ensembl"/>
</dbReference>
<dbReference type="GO" id="GO:0071222">
    <property type="term" value="P:cellular response to lipopolysaccharide"/>
    <property type="evidence" value="ECO:0007669"/>
    <property type="project" value="Ensembl"/>
</dbReference>
<dbReference type="GO" id="GO:0071294">
    <property type="term" value="P:cellular response to zinc ion"/>
    <property type="evidence" value="ECO:0007669"/>
    <property type="project" value="Ensembl"/>
</dbReference>
<dbReference type="GO" id="GO:0006821">
    <property type="term" value="P:chloride transport"/>
    <property type="evidence" value="ECO:0007669"/>
    <property type="project" value="Ensembl"/>
</dbReference>
<dbReference type="GO" id="GO:0042632">
    <property type="term" value="P:cholesterol homeostasis"/>
    <property type="evidence" value="ECO:0007669"/>
    <property type="project" value="Ensembl"/>
</dbReference>
<dbReference type="GO" id="GO:0060242">
    <property type="term" value="P:contact inhibition"/>
    <property type="evidence" value="ECO:0007669"/>
    <property type="project" value="Ensembl"/>
</dbReference>
<dbReference type="GO" id="GO:0008347">
    <property type="term" value="P:glial cell migration"/>
    <property type="evidence" value="ECO:0007669"/>
    <property type="project" value="Ensembl"/>
</dbReference>
<dbReference type="GO" id="GO:0006783">
    <property type="term" value="P:heme biosynthetic process"/>
    <property type="evidence" value="ECO:0000304"/>
    <property type="project" value="HGNC-UCL"/>
</dbReference>
<dbReference type="GO" id="GO:0072656">
    <property type="term" value="P:maintenance of protein location in mitochondrion"/>
    <property type="evidence" value="ECO:0007669"/>
    <property type="project" value="Ensembl"/>
</dbReference>
<dbReference type="GO" id="GO:0006820">
    <property type="term" value="P:monoatomic anion transport"/>
    <property type="evidence" value="ECO:0000304"/>
    <property type="project" value="HGNC-UCL"/>
</dbReference>
<dbReference type="GO" id="GO:1903579">
    <property type="term" value="P:negative regulation of ATP metabolic process"/>
    <property type="evidence" value="ECO:0007669"/>
    <property type="project" value="Ensembl"/>
</dbReference>
<dbReference type="GO" id="GO:2000853">
    <property type="term" value="P:negative regulation of corticosterone secretion"/>
    <property type="evidence" value="ECO:0007669"/>
    <property type="project" value="Ensembl"/>
</dbReference>
<dbReference type="GO" id="GO:0060253">
    <property type="term" value="P:negative regulation of glial cell proliferation"/>
    <property type="evidence" value="ECO:0007669"/>
    <property type="project" value="Ensembl"/>
</dbReference>
<dbReference type="GO" id="GO:1901525">
    <property type="term" value="P:negative regulation of mitophagy"/>
    <property type="evidence" value="ECO:0007669"/>
    <property type="project" value="Ensembl"/>
</dbReference>
<dbReference type="GO" id="GO:0045019">
    <property type="term" value="P:negative regulation of nitric oxide biosynthetic process"/>
    <property type="evidence" value="ECO:0007669"/>
    <property type="project" value="Ensembl"/>
</dbReference>
<dbReference type="GO" id="GO:0031397">
    <property type="term" value="P:negative regulation of protein ubiquitination"/>
    <property type="evidence" value="ECO:0007669"/>
    <property type="project" value="Ensembl"/>
</dbReference>
<dbReference type="GO" id="GO:0032720">
    <property type="term" value="P:negative regulation of tumor necrosis factor production"/>
    <property type="evidence" value="ECO:0007669"/>
    <property type="project" value="Ensembl"/>
</dbReference>
<dbReference type="GO" id="GO:0014012">
    <property type="term" value="P:peripheral nervous system axon regeneration"/>
    <property type="evidence" value="ECO:0007669"/>
    <property type="project" value="Ensembl"/>
</dbReference>
<dbReference type="GO" id="GO:0043065">
    <property type="term" value="P:positive regulation of apoptotic process"/>
    <property type="evidence" value="ECO:0007669"/>
    <property type="project" value="Ensembl"/>
</dbReference>
<dbReference type="GO" id="GO:0051928">
    <property type="term" value="P:positive regulation of calcium ion transport"/>
    <property type="evidence" value="ECO:0007669"/>
    <property type="project" value="Ensembl"/>
</dbReference>
<dbReference type="GO" id="GO:0060252">
    <property type="term" value="P:positive regulation of glial cell proliferation"/>
    <property type="evidence" value="ECO:0007669"/>
    <property type="project" value="Ensembl"/>
</dbReference>
<dbReference type="GO" id="GO:0051901">
    <property type="term" value="P:positive regulation of mitochondrial depolarization"/>
    <property type="evidence" value="ECO:0007669"/>
    <property type="project" value="Ensembl"/>
</dbReference>
<dbReference type="GO" id="GO:0062100">
    <property type="term" value="P:positive regulation of programmed necrotic cell death"/>
    <property type="evidence" value="ECO:0007669"/>
    <property type="project" value="Ensembl"/>
</dbReference>
<dbReference type="GO" id="GO:2000379">
    <property type="term" value="P:positive regulation of reactive oxygen species metabolic process"/>
    <property type="evidence" value="ECO:0007669"/>
    <property type="project" value="Ensembl"/>
</dbReference>
<dbReference type="GO" id="GO:0006626">
    <property type="term" value="P:protein targeting to mitochondrion"/>
    <property type="evidence" value="ECO:0000304"/>
    <property type="project" value="ProtInc"/>
</dbReference>
<dbReference type="GO" id="GO:0042127">
    <property type="term" value="P:regulation of cell population proliferation"/>
    <property type="evidence" value="ECO:0000304"/>
    <property type="project" value="HGNC-UCL"/>
</dbReference>
<dbReference type="GO" id="GO:0032374">
    <property type="term" value="P:regulation of cholesterol transport"/>
    <property type="evidence" value="ECO:0000304"/>
    <property type="project" value="HGNC-UCL"/>
</dbReference>
<dbReference type="GO" id="GO:0050810">
    <property type="term" value="P:regulation of steroid biosynthetic process"/>
    <property type="evidence" value="ECO:0007669"/>
    <property type="project" value="Ensembl"/>
</dbReference>
<dbReference type="GO" id="GO:1905144">
    <property type="term" value="P:response to acetylcholine"/>
    <property type="evidence" value="ECO:0007669"/>
    <property type="project" value="Ensembl"/>
</dbReference>
<dbReference type="GO" id="GO:0010042">
    <property type="term" value="P:response to manganese ion"/>
    <property type="evidence" value="ECO:0007669"/>
    <property type="project" value="Ensembl"/>
</dbReference>
<dbReference type="GO" id="GO:0032570">
    <property type="term" value="P:response to progesterone"/>
    <property type="evidence" value="ECO:0007669"/>
    <property type="project" value="Ensembl"/>
</dbReference>
<dbReference type="GO" id="GO:0033574">
    <property type="term" value="P:response to testosterone"/>
    <property type="evidence" value="ECO:0007669"/>
    <property type="project" value="Ensembl"/>
</dbReference>
<dbReference type="GO" id="GO:0010266">
    <property type="term" value="P:response to vitamin B1"/>
    <property type="evidence" value="ECO:0007669"/>
    <property type="project" value="Ensembl"/>
</dbReference>
<dbReference type="GO" id="GO:0009410">
    <property type="term" value="P:response to xenobiotic stimulus"/>
    <property type="evidence" value="ECO:0007669"/>
    <property type="project" value="Ensembl"/>
</dbReference>
<dbReference type="GO" id="GO:0008202">
    <property type="term" value="P:steroid metabolic process"/>
    <property type="evidence" value="ECO:0000304"/>
    <property type="project" value="HGNC-UCL"/>
</dbReference>
<dbReference type="CDD" id="cd15904">
    <property type="entry name" value="TSPO_MBR"/>
    <property type="match status" value="1"/>
</dbReference>
<dbReference type="FunFam" id="1.20.1260.100:FF:000001">
    <property type="entry name" value="translocator protein 2"/>
    <property type="match status" value="1"/>
</dbReference>
<dbReference type="Gene3D" id="1.20.1260.100">
    <property type="entry name" value="TspO/MBR protein"/>
    <property type="match status" value="1"/>
</dbReference>
<dbReference type="InterPro" id="IPR038330">
    <property type="entry name" value="TspO/MBR-related_sf"/>
</dbReference>
<dbReference type="InterPro" id="IPR004307">
    <property type="entry name" value="TspO_MBR"/>
</dbReference>
<dbReference type="PANTHER" id="PTHR10057">
    <property type="entry name" value="PERIPHERAL-TYPE BENZODIAZEPINE RECEPTOR"/>
    <property type="match status" value="1"/>
</dbReference>
<dbReference type="PANTHER" id="PTHR10057:SF5">
    <property type="entry name" value="TRANSLOCATOR PROTEIN"/>
    <property type="match status" value="1"/>
</dbReference>
<dbReference type="Pfam" id="PF03073">
    <property type="entry name" value="TspO_MBR"/>
    <property type="match status" value="1"/>
</dbReference>
<dbReference type="PIRSF" id="PIRSF005859">
    <property type="entry name" value="PBR"/>
    <property type="match status" value="1"/>
</dbReference>
<organism>
    <name type="scientific">Homo sapiens</name>
    <name type="common">Human</name>
    <dbReference type="NCBI Taxonomy" id="9606"/>
    <lineage>
        <taxon>Eukaryota</taxon>
        <taxon>Metazoa</taxon>
        <taxon>Chordata</taxon>
        <taxon>Craniata</taxon>
        <taxon>Vertebrata</taxon>
        <taxon>Euteleostomi</taxon>
        <taxon>Mammalia</taxon>
        <taxon>Eutheria</taxon>
        <taxon>Euarchontoglires</taxon>
        <taxon>Primates</taxon>
        <taxon>Haplorrhini</taxon>
        <taxon>Catarrhini</taxon>
        <taxon>Hominidae</taxon>
        <taxon>Homo</taxon>
    </lineage>
</organism>
<proteinExistence type="evidence at protein level"/>
<reference key="1">
    <citation type="journal article" date="1991" name="Eur. J. Biochem.">
        <title>Molecular cloning and chromosomal localization of a human peripheral-type benzodiazepine receptor.</title>
        <authorList>
            <person name="Riond J."/>
            <person name="Mattei M.-G."/>
            <person name="Kaghad M."/>
            <person name="Dumont X."/>
            <person name="Guillemot J.-C."/>
            <person name="le Fur G."/>
            <person name="Caput D."/>
            <person name="Ferrara P."/>
        </authorList>
    </citation>
    <scope>NUCLEOTIDE SEQUENCE [MRNA] (ISOFORM 1)</scope>
    <scope>VARIANTS ALA-147 AND HIS-162</scope>
    <scope>FUNCTION</scope>
    <scope>SUBCELLULAR LOCATION</scope>
</reference>
<reference key="2">
    <citation type="journal article" date="1995" name="Gene">
        <title>Comparison of repetitive elements in the third intron of human and rodent mitochondrial benzodiazepine receptor-encoding genes.</title>
        <authorList>
            <person name="Yakovlev A.G."/>
            <person name="Ruffo M."/>
            <person name="Jurka J."/>
            <person name="Krueger K.E."/>
        </authorList>
    </citation>
    <scope>NUCLEOTIDE SEQUENCE [GENOMIC DNA]</scope>
</reference>
<reference key="3">
    <citation type="journal article" date="2006" name="Mol. Pharmacol.">
        <title>Peripheral benzodiazepine receptor: characterization in human T-lymphoma Jurkat cells.</title>
        <authorList>
            <person name="Costa B."/>
            <person name="Salvetti A."/>
            <person name="Rossi L."/>
            <person name="Spinetti F."/>
            <person name="Lena A."/>
            <person name="Chelli B."/>
            <person name="Rechichi M."/>
            <person name="Da Pozzo E."/>
            <person name="Gremigni V."/>
            <person name="Martini C."/>
        </authorList>
    </citation>
    <scope>NUCLEOTIDE SEQUENCE [MRNA] (ISOFORM 1)</scope>
</reference>
<reference key="4">
    <citation type="submission" date="2003-05" db="EMBL/GenBank/DDBJ databases">
        <title>Cloning of human full-length CDSs in BD Creator(TM) system donor vector.</title>
        <authorList>
            <person name="Kalnine N."/>
            <person name="Chen X."/>
            <person name="Rolfs A."/>
            <person name="Halleck A."/>
            <person name="Hines L."/>
            <person name="Eisenstein S."/>
            <person name="Koundinya M."/>
            <person name="Raphael J."/>
            <person name="Moreira D."/>
            <person name="Kelley T."/>
            <person name="LaBaer J."/>
            <person name="Lin Y."/>
            <person name="Phelan M."/>
            <person name="Farmer A."/>
        </authorList>
    </citation>
    <scope>NUCLEOTIDE SEQUENCE [LARGE SCALE MRNA] (ISOFORM 1)</scope>
    <scope>VARIANTS ALA-147 AND HIS-162</scope>
</reference>
<reference key="5">
    <citation type="journal article" date="2004" name="Genome Biol.">
        <title>A genome annotation-driven approach to cloning the human ORFeome.</title>
        <authorList>
            <person name="Collins J.E."/>
            <person name="Wright C.L."/>
            <person name="Edwards C.A."/>
            <person name="Davis M.P."/>
            <person name="Grinham J.A."/>
            <person name="Cole C.G."/>
            <person name="Goward M.E."/>
            <person name="Aguado B."/>
            <person name="Mallya M."/>
            <person name="Mokrab Y."/>
            <person name="Huckle E.J."/>
            <person name="Beare D.M."/>
            <person name="Dunham I."/>
        </authorList>
    </citation>
    <scope>NUCLEOTIDE SEQUENCE [LARGE SCALE MRNA] (ISOFORM 1)</scope>
    <scope>VARIANTS ALA-147 AND HIS-162</scope>
</reference>
<reference key="6">
    <citation type="submission" date="2003-09" db="EMBL/GenBank/DDBJ databases">
        <authorList>
            <consortium name="NIEHS SNPs program"/>
        </authorList>
    </citation>
    <scope>NUCLEOTIDE SEQUENCE [GENOMIC DNA]</scope>
    <scope>VARIANTS ALA-147 AND GLN-169</scope>
</reference>
<reference key="7">
    <citation type="journal article" date="1999" name="Nature">
        <title>The DNA sequence of human chromosome 22.</title>
        <authorList>
            <person name="Dunham I."/>
            <person name="Hunt A.R."/>
            <person name="Collins J.E."/>
            <person name="Bruskiewich R."/>
            <person name="Beare D.M."/>
            <person name="Clamp M."/>
            <person name="Smink L.J."/>
            <person name="Ainscough R."/>
            <person name="Almeida J.P."/>
            <person name="Babbage A.K."/>
            <person name="Bagguley C."/>
            <person name="Bailey J."/>
            <person name="Barlow K.F."/>
            <person name="Bates K.N."/>
            <person name="Beasley O.P."/>
            <person name="Bird C.P."/>
            <person name="Blakey S.E."/>
            <person name="Bridgeman A.M."/>
            <person name="Buck D."/>
            <person name="Burgess J."/>
            <person name="Burrill W.D."/>
            <person name="Burton J."/>
            <person name="Carder C."/>
            <person name="Carter N.P."/>
            <person name="Chen Y."/>
            <person name="Clark G."/>
            <person name="Clegg S.M."/>
            <person name="Cobley V.E."/>
            <person name="Cole C.G."/>
            <person name="Collier R.E."/>
            <person name="Connor R."/>
            <person name="Conroy D."/>
            <person name="Corby N.R."/>
            <person name="Coville G.J."/>
            <person name="Cox A.V."/>
            <person name="Davis J."/>
            <person name="Dawson E."/>
            <person name="Dhami P.D."/>
            <person name="Dockree C."/>
            <person name="Dodsworth S.J."/>
            <person name="Durbin R.M."/>
            <person name="Ellington A.G."/>
            <person name="Evans K.L."/>
            <person name="Fey J.M."/>
            <person name="Fleming K."/>
            <person name="French L."/>
            <person name="Garner A.A."/>
            <person name="Gilbert J.G.R."/>
            <person name="Goward M.E."/>
            <person name="Grafham D.V."/>
            <person name="Griffiths M.N.D."/>
            <person name="Hall C."/>
            <person name="Hall R.E."/>
            <person name="Hall-Tamlyn G."/>
            <person name="Heathcott R.W."/>
            <person name="Ho S."/>
            <person name="Holmes S."/>
            <person name="Hunt S.E."/>
            <person name="Jones M.C."/>
            <person name="Kershaw J."/>
            <person name="Kimberley A.M."/>
            <person name="King A."/>
            <person name="Laird G.K."/>
            <person name="Langford C.F."/>
            <person name="Leversha M.A."/>
            <person name="Lloyd C."/>
            <person name="Lloyd D.M."/>
            <person name="Martyn I.D."/>
            <person name="Mashreghi-Mohammadi M."/>
            <person name="Matthews L.H."/>
            <person name="Mccann O.T."/>
            <person name="Mcclay J."/>
            <person name="Mclaren S."/>
            <person name="McMurray A.A."/>
            <person name="Milne S.A."/>
            <person name="Mortimore B.J."/>
            <person name="Odell C.N."/>
            <person name="Pavitt R."/>
            <person name="Pearce A.V."/>
            <person name="Pearson D."/>
            <person name="Phillimore B.J.C.T."/>
            <person name="Phillips S.H."/>
            <person name="Plumb R.W."/>
            <person name="Ramsay H."/>
            <person name="Ramsey Y."/>
            <person name="Rogers L."/>
            <person name="Ross M.T."/>
            <person name="Scott C.E."/>
            <person name="Sehra H.K."/>
            <person name="Skuce C.D."/>
            <person name="Smalley S."/>
            <person name="Smith M.L."/>
            <person name="Soderlund C."/>
            <person name="Spragon L."/>
            <person name="Steward C.A."/>
            <person name="Sulston J.E."/>
            <person name="Swann R.M."/>
            <person name="Vaudin M."/>
            <person name="Wall M."/>
            <person name="Wallis J.M."/>
            <person name="Whiteley M.N."/>
            <person name="Willey D.L."/>
            <person name="Williams L."/>
            <person name="Williams S.A."/>
            <person name="Williamson H."/>
            <person name="Wilmer T.E."/>
            <person name="Wilming L."/>
            <person name="Wright C.L."/>
            <person name="Hubbard T."/>
            <person name="Bentley D.R."/>
            <person name="Beck S."/>
            <person name="Rogers J."/>
            <person name="Shimizu N."/>
            <person name="Minoshima S."/>
            <person name="Kawasaki K."/>
            <person name="Sasaki T."/>
            <person name="Asakawa S."/>
            <person name="Kudoh J."/>
            <person name="Shintani A."/>
            <person name="Shibuya K."/>
            <person name="Yoshizaki Y."/>
            <person name="Aoki N."/>
            <person name="Mitsuyama S."/>
            <person name="Roe B.A."/>
            <person name="Chen F."/>
            <person name="Chu L."/>
            <person name="Crabtree J."/>
            <person name="Deschamps S."/>
            <person name="Do A."/>
            <person name="Do T."/>
            <person name="Dorman A."/>
            <person name="Fang F."/>
            <person name="Fu Y."/>
            <person name="Hu P."/>
            <person name="Hua A."/>
            <person name="Kenton S."/>
            <person name="Lai H."/>
            <person name="Lao H.I."/>
            <person name="Lewis J."/>
            <person name="Lewis S."/>
            <person name="Lin S.-P."/>
            <person name="Loh P."/>
            <person name="Malaj E."/>
            <person name="Nguyen T."/>
            <person name="Pan H."/>
            <person name="Phan S."/>
            <person name="Qi S."/>
            <person name="Qian Y."/>
            <person name="Ray L."/>
            <person name="Ren Q."/>
            <person name="Shaull S."/>
            <person name="Sloan D."/>
            <person name="Song L."/>
            <person name="Wang Q."/>
            <person name="Wang Y."/>
            <person name="Wang Z."/>
            <person name="White J."/>
            <person name="Willingham D."/>
            <person name="Wu H."/>
            <person name="Yao Z."/>
            <person name="Zhan M."/>
            <person name="Zhang G."/>
            <person name="Chissoe S."/>
            <person name="Murray J."/>
            <person name="Miller N."/>
            <person name="Minx P."/>
            <person name="Fulton R."/>
            <person name="Johnson D."/>
            <person name="Bemis G."/>
            <person name="Bentley D."/>
            <person name="Bradshaw H."/>
            <person name="Bourne S."/>
            <person name="Cordes M."/>
            <person name="Du Z."/>
            <person name="Fulton L."/>
            <person name="Goela D."/>
            <person name="Graves T."/>
            <person name="Hawkins J."/>
            <person name="Hinds K."/>
            <person name="Kemp K."/>
            <person name="Latreille P."/>
            <person name="Layman D."/>
            <person name="Ozersky P."/>
            <person name="Rohlfing T."/>
            <person name="Scheet P."/>
            <person name="Walker C."/>
            <person name="Wamsley A."/>
            <person name="Wohldmann P."/>
            <person name="Pepin K."/>
            <person name="Nelson J."/>
            <person name="Korf I."/>
            <person name="Bedell J.A."/>
            <person name="Hillier L.W."/>
            <person name="Mardis E."/>
            <person name="Waterston R."/>
            <person name="Wilson R."/>
            <person name="Emanuel B.S."/>
            <person name="Shaikh T."/>
            <person name="Kurahashi H."/>
            <person name="Saitta S."/>
            <person name="Budarf M.L."/>
            <person name="McDermid H.E."/>
            <person name="Johnson A."/>
            <person name="Wong A.C.C."/>
            <person name="Morrow B.E."/>
            <person name="Edelmann L."/>
            <person name="Kim U.J."/>
            <person name="Shizuya H."/>
            <person name="Simon M.I."/>
            <person name="Dumanski J.P."/>
            <person name="Peyrard M."/>
            <person name="Kedra D."/>
            <person name="Seroussi E."/>
            <person name="Fransson I."/>
            <person name="Tapia I."/>
            <person name="Bruder C.E."/>
            <person name="O'Brien K.P."/>
            <person name="Wilkinson P."/>
            <person name="Bodenteich A."/>
            <person name="Hartman K."/>
            <person name="Hu X."/>
            <person name="Khan A.S."/>
            <person name="Lane L."/>
            <person name="Tilahun Y."/>
            <person name="Wright H."/>
        </authorList>
    </citation>
    <scope>NUCLEOTIDE SEQUENCE [LARGE SCALE GENOMIC DNA]</scope>
</reference>
<reference key="8">
    <citation type="journal article" date="2004" name="Genome Res.">
        <title>The status, quality, and expansion of the NIH full-length cDNA project: the Mammalian Gene Collection (MGC).</title>
        <authorList>
            <consortium name="The MGC Project Team"/>
        </authorList>
    </citation>
    <scope>NUCLEOTIDE SEQUENCE [LARGE SCALE MRNA] (ISOFORM 1)</scope>
    <source>
        <tissue>Lymph</tissue>
    </source>
</reference>
<reference key="9">
    <citation type="journal article" date="1999" name="J. Biol. Chem.">
        <title>Cloning and characterization of PRAX-1. A new protein that specifically interacts with the peripheral benzodiazepine receptor.</title>
        <authorList>
            <person name="Galiegue S."/>
            <person name="Jbilo O."/>
            <person name="Combes T."/>
            <person name="Bribes E."/>
            <person name="Carayon P."/>
            <person name="Le Fur G."/>
            <person name="Casellas P."/>
        </authorList>
    </citation>
    <scope>INTERACTION WITH TSPOAP1</scope>
    <source>
        <tissue>Brain</tissue>
    </source>
</reference>
<reference key="10">
    <citation type="journal article" date="2006" name="Trends Pharmacol. Sci.">
        <title>Translocator protein (18kDa): new nomenclature for the peripheral-type benzodiazepine receptor based on its structure and molecular function.</title>
        <authorList>
            <person name="Papadopoulos V."/>
            <person name="Baraldi M."/>
            <person name="Guilarte T.R."/>
            <person name="Knudsen T.B."/>
            <person name="Lacapere J.-J."/>
            <person name="Lindemann P."/>
            <person name="Norenberg M.D."/>
            <person name="Nutt D."/>
            <person name="Weizman A."/>
            <person name="Zhang M.-R."/>
            <person name="Gavish M."/>
        </authorList>
    </citation>
    <scope>NOMENCLATURE</scope>
</reference>
<reference key="11">
    <citation type="journal article" date="2007" name="Int. J. Oncol.">
        <title>Cellular expression, localization and interactions of the product of the human MOST-1 gene associated with breast and prostate cancers.</title>
        <authorList>
            <person name="Tan J.M.M."/>
            <person name="Chow V.T.K."/>
        </authorList>
    </citation>
    <scope>INTERACTION WITH MOST-1</scope>
</reference>
<reference key="12">
    <citation type="journal article" date="2010" name="Mol. Cell. Endocrinol.">
        <title>Regulation of translocator protein 18 kDa (TSPO) expression in health and disease states.</title>
        <authorList>
            <person name="Batarseh A."/>
            <person name="Papadopoulos V."/>
        </authorList>
    </citation>
    <scope>TISSUE SPECIFICITY</scope>
</reference>
<reference key="13">
    <citation type="journal article" date="2011" name="BMC Syst. Biol.">
        <title>Initial characterization of the human central proteome.</title>
        <authorList>
            <person name="Burkard T.R."/>
            <person name="Planyavsky M."/>
            <person name="Kaupe I."/>
            <person name="Breitwieser F.P."/>
            <person name="Buerckstuemmer T."/>
            <person name="Bennett K.L."/>
            <person name="Superti-Furga G."/>
            <person name="Colinge J."/>
        </authorList>
    </citation>
    <scope>IDENTIFICATION BY MASS SPECTROMETRY [LARGE SCALE ANALYSIS]</scope>
</reference>
<reference key="14">
    <citation type="journal article" date="2014" name="Clin. Sci.">
        <title>Targeting mitochondrial 18kDa translocator protein (TSPO) regulates macrophage cholesterol efflux and lipid phenotype.</title>
        <authorList>
            <person name="Taylor J.M."/>
            <person name="Allen A.M."/>
            <person name="Graham A."/>
        </authorList>
    </citation>
    <scope>FUNCTION</scope>
</reference>
<reference key="15">
    <citation type="journal article" date="2015" name="Proteomics">
        <title>N-terminome analysis of the human mitochondrial proteome.</title>
        <authorList>
            <person name="Vaca Jacome A.S."/>
            <person name="Rabilloud T."/>
            <person name="Schaeffer-Reiss C."/>
            <person name="Rompais M."/>
            <person name="Ayoub D."/>
            <person name="Lane L."/>
            <person name="Bairoch A."/>
            <person name="Van Dorsselaer A."/>
            <person name="Carapito C."/>
        </authorList>
    </citation>
    <scope>CLEAVAGE OF INITIATOR METHIONINE [LARGE SCALE ANALYSIS]</scope>
    <scope>IDENTIFICATION BY MASS SPECTROMETRY [LARGE SCALE ANALYSIS]</scope>
</reference>
<reference key="16">
    <citation type="journal article" date="2016" name="Sci. Rep.">
        <title>TSPO ligands stimulate ZnPPIX transport and ROS accumulation leading to the inhibition of P. falciparum growth in human blood.</title>
        <authorList>
            <person name="Marginedas-Freixa I."/>
            <person name="Hattab C."/>
            <person name="Bouyer G."/>
            <person name="Halle F."/>
            <person name="Chene A."/>
            <person name="Lefevre S.D."/>
            <person name="Cambot M."/>
            <person name="Cueff A."/>
            <person name="Schmitt M."/>
            <person name="Gamain B."/>
            <person name="Lacapere J.J."/>
            <person name="Egee S."/>
            <person name="Bihel F."/>
            <person name="Le Van Kim C."/>
            <person name="Ostuni M.A."/>
        </authorList>
    </citation>
    <scope>DEVELOPMENTAL STAGE</scope>
</reference>
<reference key="17">
    <citation type="journal article" date="2000" name="J. Neural Transm.">
        <title>An association study between two missense variations of the benzodiazepine receptor (peripheral) gene and schizophrenia in a Japanese sample.</title>
        <authorList>
            <person name="Kurumaji A."/>
            <person name="Nomoto H."/>
            <person name="Yoshikawa T."/>
            <person name="Okubo Y."/>
            <person name="Toru M."/>
        </authorList>
    </citation>
    <scope>VARIANTS ALA-147 AND HIS-162</scope>
</reference>
<reference key="18">
    <citation type="journal article" date="2001" name="Am. J. Med. Genet.">
        <title>No association of two missense variations of the benzodiazepine receptor (peripheral) gene and mood disorders in a Japanese sample.</title>
        <authorList>
            <person name="Kurumaji A."/>
            <person name="Nomoto H."/>
            <person name="Yamada K."/>
            <person name="Yoshikawa T."/>
            <person name="Toru M."/>
        </authorList>
    </citation>
    <scope>VARIANTS ALA-147 AND HIS-162</scope>
</reference>
<reference key="19">
    <citation type="journal article" date="2009" name="Endocrinology">
        <title>The spontaneous Ala147Thr amino acid substitution within the translocator protein influences pregnenolone production in lymphomonocytes of healthy individuals.</title>
        <authorList>
            <person name="Costa B."/>
            <person name="Pini S."/>
            <person name="Gabelloni P."/>
            <person name="Da Pozzo E."/>
            <person name="Abelli M."/>
            <person name="Lari L."/>
            <person name="Preve M."/>
            <person name="Lucacchini A."/>
            <person name="Cassano G.B."/>
            <person name="Martini C."/>
        </authorList>
    </citation>
    <scope>CHARACTERIZATION OF VARIANT ALA-147</scope>
</reference>
<reference key="20">
    <citation type="journal article" date="2023" name="Int. J. Mol. Sci.">
        <title>Sigma-2 Receptor Ligand Binding Modulates Association between TSPO and TMEM97.</title>
        <authorList>
            <person name="Thejer B.M."/>
            <person name="Infantino V."/>
            <person name="Santarsiero A."/>
            <person name="Pappalardo I."/>
            <person name="Abatematteo F.S."/>
            <person name="Teakel S."/>
            <person name="Van Oosterum A."/>
            <person name="Mach R.H."/>
            <person name="Denora N."/>
            <person name="Lee B.C."/>
            <person name="Resta N."/>
            <person name="Bagnulo R."/>
            <person name="Niso M."/>
            <person name="Contino M."/>
            <person name="Montsch B."/>
            <person name="Heffeter P."/>
            <person name="Abate C."/>
            <person name="Cahill M.A."/>
        </authorList>
    </citation>
    <scope>INTERACTION WITH TMEM97 AND PGRMC1</scope>
</reference>
<feature type="initiator methionine" description="Removed" evidence="16">
    <location>
        <position position="1"/>
    </location>
</feature>
<feature type="chain" id="PRO_0000190997" description="Translocator protein">
    <location>
        <begin position="2"/>
        <end position="169"/>
    </location>
</feature>
<feature type="topological domain" description="Mitochondrial intermembrane" evidence="1">
    <location>
        <begin position="2"/>
        <end position="5"/>
    </location>
</feature>
<feature type="transmembrane region" description="Helical; Name=1" evidence="1">
    <location>
        <begin position="6"/>
        <end position="26"/>
    </location>
</feature>
<feature type="topological domain" description="Cytoplasmic" evidence="1">
    <location>
        <begin position="27"/>
        <end position="46"/>
    </location>
</feature>
<feature type="transmembrane region" description="Helical; Name=2" evidence="1">
    <location>
        <begin position="47"/>
        <end position="67"/>
    </location>
</feature>
<feature type="topological domain" description="Mitochondrial intermembrane" evidence="1">
    <location>
        <begin position="68"/>
        <end position="79"/>
    </location>
</feature>
<feature type="transmembrane region" description="Helical; Name=3" evidence="1">
    <location>
        <begin position="80"/>
        <end position="100"/>
    </location>
</feature>
<feature type="topological domain" description="Cytoplasmic" evidence="1">
    <location>
        <begin position="101"/>
        <end position="105"/>
    </location>
</feature>
<feature type="transmembrane region" description="Helical; Name=4" evidence="1">
    <location>
        <begin position="106"/>
        <end position="126"/>
    </location>
</feature>
<feature type="topological domain" description="Mitochondrial intermembrane" evidence="1">
    <location>
        <begin position="127"/>
        <end position="134"/>
    </location>
</feature>
<feature type="transmembrane region" description="Helical; Name=5" evidence="1">
    <location>
        <begin position="135"/>
        <end position="155"/>
    </location>
</feature>
<feature type="topological domain" description="Cytoplasmic" evidence="1">
    <location>
        <begin position="156"/>
        <end position="169"/>
    </location>
</feature>
<feature type="sequence variant" id="VAR_013617" description="Associated with higher levels of pregnenolone production by lymphomonocytes and with increased plasma levels of cholesterol-rich low density lipoprotein; dbSNP:rs6971." evidence="2 3 4 6 7 13 14">
    <original>T</original>
    <variation>A</variation>
    <location>
        <position position="147"/>
    </location>
</feature>
<feature type="sequence variant" id="VAR_013618" description="In dbSNP:rs6972." evidence="2 3 4 6 13">
    <original>R</original>
    <variation>H</variation>
    <location>
        <position position="162"/>
    </location>
</feature>
<feature type="sequence variant" id="VAR_018868" description="In dbSNP:rs9333342." evidence="14">
    <original>E</original>
    <variation>Q</variation>
    <location>
        <position position="169"/>
    </location>
</feature>
<gene>
    <name type="primary">TSPO</name>
    <name type="synonym">BZRP</name>
    <name type="synonym">MBR</name>
</gene>
<sequence length="169" mass="18828">MAPPWVPAMGFTLAPSLGCFVGSRFVHGEGLRWYAGLQKPSWHPPHWVLGPVWGTLYSAMGYGSYLVWKELGGFTEKAVVPLGLYTGQLALNWAWPPIFFGARQMGWALVDLLLVSGAAAATTVAWYQVSPLAARLLYPYLAWLAFTTTLNYCVWRDNHGWRGGRRLPE</sequence>
<accession>P30536</accession>
<accession>Q53Y59</accession>
<accession>Q6ICF9</accession>
<accession>Q96TF6</accession>
<name>TSPO_HUMAN</name>
<protein>
    <recommendedName>
        <fullName>Translocator protein</fullName>
    </recommendedName>
    <alternativeName>
        <fullName>Mitochondrial benzodiazepine receptor</fullName>
    </alternativeName>
    <alternativeName>
        <fullName>PKBS</fullName>
    </alternativeName>
    <alternativeName>
        <fullName>Peripheral-type benzodiazepine receptor</fullName>
        <shortName>PBR</shortName>
    </alternativeName>
</protein>
<keyword id="KW-0025">Alternative splicing</keyword>
<keyword id="KW-0445">Lipid transport</keyword>
<keyword id="KW-0472">Membrane</keyword>
<keyword id="KW-0496">Mitochondrion</keyword>
<keyword id="KW-1267">Proteomics identification</keyword>
<keyword id="KW-0675">Receptor</keyword>
<keyword id="KW-1185">Reference proteome</keyword>
<keyword id="KW-0812">Transmembrane</keyword>
<keyword id="KW-1133">Transmembrane helix</keyword>
<keyword id="KW-0813">Transport</keyword>
<comment type="function">
    <text evidence="1 6 9">Can bind protoporphyrin IX and may play a role in the transport of porphyrins and heme (By similarity). Promotes the transport of cholesterol across mitochondrial membranes and may play a role in lipid metabolism (PubMed:24814875), but its precise physiological role is controversial. It is apparently not required for steroid hormone biosynthesis. Was initially identified as peripheral-type benzodiazepine receptor; can also bind isoquinoline carboxamides (PubMed:1847678).</text>
</comment>
<comment type="subunit">
    <text evidence="1 5 11 12">Interacts with TSPOAP1 (By similarity). May interact with STAR (By similarity). Interacts with MOST-1. Interacts with TMEM97 (PubMed:37047353). Forms a complex with TMEM97 and PGRMC1; the interaction occurs in MIA PaCa-2 cells but not in MCF7 cells (PubMed:37047353).</text>
</comment>
<comment type="interaction">
    <interactant intactId="EBI-6623146">
        <id>P30536</id>
    </interactant>
    <interactant intactId="EBI-19125216">
        <id>Q86WK6</id>
        <label>AMIGO1</label>
    </interactant>
    <organismsDiffer>false</organismsDiffer>
    <experiments>3</experiments>
</comment>
<comment type="interaction">
    <interactant intactId="EBI-6623146">
        <id>P30536</id>
    </interactant>
    <interactant intactId="EBI-2873246">
        <id>Q8IUN9</id>
        <label>CLEC10A</label>
    </interactant>
    <organismsDiffer>false</organismsDiffer>
    <experiments>3</experiments>
</comment>
<comment type="interaction">
    <interactant intactId="EBI-6623146">
        <id>P30536</id>
    </interactant>
    <interactant intactId="EBI-725950">
        <id>P29762</id>
        <label>CRABP1</label>
    </interactant>
    <organismsDiffer>false</organismsDiffer>
    <experiments>2</experiments>
</comment>
<comment type="interaction">
    <interactant intactId="EBI-6623146">
        <id>P30536</id>
    </interactant>
    <interactant intactId="EBI-6942903">
        <id>Q96BA8</id>
        <label>CREB3L1</label>
    </interactant>
    <organismsDiffer>false</organismsDiffer>
    <experiments>7</experiments>
</comment>
<comment type="interaction">
    <interactant intactId="EBI-6623146">
        <id>P30536</id>
    </interactant>
    <interactant intactId="EBI-18304435">
        <id>Q5JX71</id>
        <label>FAM209A</label>
    </interactant>
    <organismsDiffer>false</organismsDiffer>
    <experiments>3</experiments>
</comment>
<comment type="interaction">
    <interactant intactId="EBI-6623146">
        <id>P30536</id>
    </interactant>
    <interactant intactId="EBI-725421">
        <id>P32942</id>
        <label>ICAM3</label>
    </interactant>
    <organismsDiffer>false</organismsDiffer>
    <experiments>3</experiments>
</comment>
<comment type="interaction">
    <interactant intactId="EBI-6623146">
        <id>P30536</id>
    </interactant>
    <interactant intactId="EBI-6918743">
        <id>Q9H3M0</id>
        <label>KCNF1</label>
    </interactant>
    <organismsDiffer>false</organismsDiffer>
    <experiments>3</experiments>
</comment>
<comment type="interaction">
    <interactant intactId="EBI-6623146">
        <id>P30536</id>
    </interactant>
    <interactant intactId="EBI-17490413">
        <id>A8MZ59</id>
        <label>LEUTX</label>
    </interactant>
    <organismsDiffer>false</organismsDiffer>
    <experiments>3</experiments>
</comment>
<comment type="interaction">
    <interactant intactId="EBI-6623146">
        <id>P30536</id>
    </interactant>
    <interactant intactId="EBI-2820517">
        <id>Q8TAF8</id>
        <label>LHFPL5</label>
    </interactant>
    <organismsDiffer>false</organismsDiffer>
    <experiments>3</experiments>
</comment>
<comment type="interaction">
    <interactant intactId="EBI-6623146">
        <id>P30536</id>
    </interactant>
    <interactant intactId="EBI-17200970">
        <id>Q6UWN5</id>
        <label>LYPD5</label>
    </interactant>
    <organismsDiffer>false</organismsDiffer>
    <experiments>3</experiments>
</comment>
<comment type="interaction">
    <interactant intactId="EBI-6623146">
        <id>P30536</id>
    </interactant>
    <interactant intactId="EBI-16439278">
        <id>Q6FHY5</id>
        <label>MEOX2</label>
    </interactant>
    <organismsDiffer>false</organismsDiffer>
    <experiments>3</experiments>
</comment>
<comment type="interaction">
    <interactant intactId="EBI-6623146">
        <id>P30536</id>
    </interactant>
    <interactant intactId="EBI-14061804">
        <id>Q68D85</id>
        <label>NCR3LG1</label>
    </interactant>
    <organismsDiffer>false</organismsDiffer>
    <experiments>3</experiments>
</comment>
<comment type="interaction">
    <interactant intactId="EBI-6623146">
        <id>P30536</id>
    </interactant>
    <interactant intactId="EBI-3919694">
        <id>P15151</id>
        <label>PVR</label>
    </interactant>
    <organismsDiffer>false</organismsDiffer>
    <experiments>3</experiments>
</comment>
<comment type="interaction">
    <interactant intactId="EBI-6623146">
        <id>P30536</id>
    </interactant>
    <interactant intactId="EBI-8638294">
        <id>Q9NUH8</id>
        <label>TMEM14B</label>
    </interactant>
    <organismsDiffer>false</organismsDiffer>
    <experiments>3</experiments>
</comment>
<comment type="interaction">
    <interactant intactId="EBI-6623146">
        <id>P30536</id>
    </interactant>
    <interactant intactId="EBI-723976">
        <id>Q9P0T7</id>
        <label>TMEM9</label>
    </interactant>
    <organismsDiffer>false</organismsDiffer>
    <experiments>3</experiments>
</comment>
<comment type="subcellular location">
    <subcellularLocation>
        <location evidence="6">Mitochondrion membrane</location>
        <topology evidence="6">Multi-pass membrane protein</topology>
    </subcellularLocation>
</comment>
<comment type="alternative products">
    <event type="alternative splicing"/>
    <isoform>
        <id>P30536-1</id>
        <name>1</name>
        <sequence type="displayed"/>
    </isoform>
    <isoform>
        <id>B1AH88-1</id>
        <name>2</name>
        <name>PBR-S</name>
        <sequence type="external"/>
    </isoform>
</comment>
<comment type="tissue specificity">
    <text evidence="8">Found in many tissue types. Expressed at the highest levels under normal conditions in tissues that synthesize steroids.</text>
</comment>
<comment type="developmental stage">
    <text evidence="10">In erythrocytes, expression levels decrease throughout differentiation (PubMed:27641616). Not expressed in mature erythrocytes (PubMed:27641616).</text>
</comment>
<comment type="similarity">
    <text evidence="15">Belongs to the TspO/BZRP family.</text>
</comment>